<comment type="function">
    <text evidence="2 3">Part of the ABC transporter complexes DasABC-MsiK and NgcEFG-MsiK involved in N,N'-diacetylchitobiose ((GlcNAc)2) uptake. Responsible for energy coupling to the transport system.</text>
</comment>
<comment type="subunit">
    <text evidence="6 7">The DasABC-MsiK complex is composed of two ATP-binding proteins (MsiK), two transmembrane proteins (DasB and DasC) and a solute-binding protein (DasA) (Probable). The NgcEFG-MsiK complex is composed of two ATP-binding proteins (MsiK), two transmembrane proteins (NgcF and NgcG) and a solute-binding protein (NgcE) (Probable).</text>
</comment>
<comment type="subcellular location">
    <subcellularLocation>
        <location evidence="5">Cell membrane</location>
        <topology evidence="5">Peripheral membrane protein</topology>
    </subcellularLocation>
</comment>
<comment type="induction">
    <text evidence="2">Constitutively expressed.</text>
</comment>
<comment type="disruption phenotype">
    <text evidence="2">Disruption of the gene severely affects the ability of the mutant to utilize maltose, cellobiose, starch, cellulose, chitin and chitosan, but not glucose. The null mutant lacks (GlcNAc)2-uptake activity, but GlcNAc transport activity is unaffected. Mutant shows defects in induction of chitinase production.</text>
</comment>
<comment type="similarity">
    <text evidence="5">Belongs to the ABC transporter superfamily.</text>
</comment>
<organism>
    <name type="scientific">Streptomyces coelicolor (strain ATCC BAA-471 / A3(2) / M145)</name>
    <dbReference type="NCBI Taxonomy" id="100226"/>
    <lineage>
        <taxon>Bacteria</taxon>
        <taxon>Bacillati</taxon>
        <taxon>Actinomycetota</taxon>
        <taxon>Actinomycetes</taxon>
        <taxon>Kitasatosporales</taxon>
        <taxon>Streptomycetaceae</taxon>
        <taxon>Streptomyces</taxon>
        <taxon>Streptomyces albidoflavus group</taxon>
    </lineage>
</organism>
<accession>Q9L0Q1</accession>
<protein>
    <recommendedName>
        <fullName evidence="5">Diacetylchitobiose uptake system ATP-binding protein MsiK</fullName>
        <ecNumber evidence="5">7.5.2.-</ecNumber>
    </recommendedName>
</protein>
<name>MSIK_STRCO</name>
<keyword id="KW-0067">ATP-binding</keyword>
<keyword id="KW-1003">Cell membrane</keyword>
<keyword id="KW-0472">Membrane</keyword>
<keyword id="KW-0547">Nucleotide-binding</keyword>
<keyword id="KW-1185">Reference proteome</keyword>
<keyword id="KW-0762">Sugar transport</keyword>
<keyword id="KW-1278">Translocase</keyword>
<keyword id="KW-0813">Transport</keyword>
<proteinExistence type="evidence at protein level"/>
<reference key="1">
    <citation type="journal article" date="2002" name="Nature">
        <title>Complete genome sequence of the model actinomycete Streptomyces coelicolor A3(2).</title>
        <authorList>
            <person name="Bentley S.D."/>
            <person name="Chater K.F."/>
            <person name="Cerdeno-Tarraga A.-M."/>
            <person name="Challis G.L."/>
            <person name="Thomson N.R."/>
            <person name="James K.D."/>
            <person name="Harris D.E."/>
            <person name="Quail M.A."/>
            <person name="Kieser H."/>
            <person name="Harper D."/>
            <person name="Bateman A."/>
            <person name="Brown S."/>
            <person name="Chandra G."/>
            <person name="Chen C.W."/>
            <person name="Collins M."/>
            <person name="Cronin A."/>
            <person name="Fraser A."/>
            <person name="Goble A."/>
            <person name="Hidalgo J."/>
            <person name="Hornsby T."/>
            <person name="Howarth S."/>
            <person name="Huang C.-H."/>
            <person name="Kieser T."/>
            <person name="Larke L."/>
            <person name="Murphy L.D."/>
            <person name="Oliver K."/>
            <person name="O'Neil S."/>
            <person name="Rabbinowitsch E."/>
            <person name="Rajandream M.A."/>
            <person name="Rutherford K.M."/>
            <person name="Rutter S."/>
            <person name="Seeger K."/>
            <person name="Saunders D."/>
            <person name="Sharp S."/>
            <person name="Squares R."/>
            <person name="Squares S."/>
            <person name="Taylor K."/>
            <person name="Warren T."/>
            <person name="Wietzorrek A."/>
            <person name="Woodward J.R."/>
            <person name="Barrell B.G."/>
            <person name="Parkhill J."/>
            <person name="Hopwood D.A."/>
        </authorList>
    </citation>
    <scope>NUCLEOTIDE SEQUENCE [LARGE SCALE GENOMIC DNA]</scope>
    <source>
        <strain>ATCC BAA-471 / A3(2) / M145</strain>
    </source>
</reference>
<reference key="2">
    <citation type="journal article" date="2008" name="Microbiology">
        <title>The msiK gene, encoding the ATP-hydrolysing component of N,N'-diacetylchitobiose ABC transporters, is essential for induction of chitinase production in Streptomyces coelicolor A3(2).</title>
        <authorList>
            <person name="Saito A."/>
            <person name="Fujii T."/>
            <person name="Shinya T."/>
            <person name="Shibuya N."/>
            <person name="Ando A."/>
            <person name="Miyashita K."/>
        </authorList>
    </citation>
    <scope>FUNCTION</scope>
    <scope>SUBUNIT</scope>
    <scope>INDUCTION</scope>
    <scope>DISRUPTION PHENOTYPE</scope>
    <source>
        <strain>ATCC BAA-471 / A3(2) / M145</strain>
    </source>
</reference>
<reference key="3">
    <citation type="journal article" date="2018" name="Microbes Environ.">
        <title>NgcESco acts as a lower-affinity binding protein of an ABC transporter for the uptake of N,N'-diacetylchitobiose in Streptomyces coelicolor A3(2).</title>
        <authorList>
            <person name="Iinuma C."/>
            <person name="Saito A."/>
            <person name="Ohnuma T."/>
            <person name="Tenconi E."/>
            <person name="Rosu A."/>
            <person name="Colson S."/>
            <person name="Mizutani Y."/>
            <person name="Liu F."/>
            <person name="Swiatek-Polatynska M."/>
            <person name="van Wezel G.P."/>
            <person name="Rigali S."/>
            <person name="Fujii T."/>
            <person name="Miyashita K."/>
        </authorList>
    </citation>
    <scope>FUNCTION</scope>
    <scope>SUBUNIT</scope>
    <source>
        <strain>ATCC BAA-471 / A3(2) / M145</strain>
    </source>
</reference>
<dbReference type="EC" id="7.5.2.-" evidence="5"/>
<dbReference type="EMBL" id="AL939119">
    <property type="protein sequence ID" value="CAB77334.1"/>
    <property type="molecule type" value="Genomic_DNA"/>
</dbReference>
<dbReference type="RefSeq" id="NP_628414.1">
    <property type="nucleotide sequence ID" value="NC_003888.3"/>
</dbReference>
<dbReference type="RefSeq" id="WP_011029527.1">
    <property type="nucleotide sequence ID" value="NZ_VNID01000031.1"/>
</dbReference>
<dbReference type="SMR" id="Q9L0Q1"/>
<dbReference type="FunCoup" id="Q9L0Q1">
    <property type="interactions" value="82"/>
</dbReference>
<dbReference type="STRING" id="100226.gene:17761884"/>
<dbReference type="TCDB" id="3.A.1.1.33">
    <property type="family name" value="the atp-binding cassette (abc) superfamily"/>
</dbReference>
<dbReference type="TCDB" id="3.A.1.1.36">
    <property type="family name" value="the atp-binding cassette (abc) superfamily"/>
</dbReference>
<dbReference type="PaxDb" id="100226-SCO4240"/>
<dbReference type="GeneID" id="96656367"/>
<dbReference type="KEGG" id="sco:SCO4240"/>
<dbReference type="PATRIC" id="fig|100226.15.peg.4303"/>
<dbReference type="eggNOG" id="COG3842">
    <property type="taxonomic scope" value="Bacteria"/>
</dbReference>
<dbReference type="HOGENOM" id="CLU_000604_1_1_11"/>
<dbReference type="InParanoid" id="Q9L0Q1"/>
<dbReference type="OrthoDB" id="9802264at2"/>
<dbReference type="PhylomeDB" id="Q9L0Q1"/>
<dbReference type="Proteomes" id="UP000001973">
    <property type="component" value="Chromosome"/>
</dbReference>
<dbReference type="GO" id="GO:0055052">
    <property type="term" value="C:ATP-binding cassette (ABC) transporter complex, substrate-binding subunit-containing"/>
    <property type="evidence" value="ECO:0000318"/>
    <property type="project" value="GO_Central"/>
</dbReference>
<dbReference type="GO" id="GO:0140359">
    <property type="term" value="F:ABC-type transporter activity"/>
    <property type="evidence" value="ECO:0007669"/>
    <property type="project" value="InterPro"/>
</dbReference>
<dbReference type="GO" id="GO:0005524">
    <property type="term" value="F:ATP binding"/>
    <property type="evidence" value="ECO:0007669"/>
    <property type="project" value="UniProtKB-KW"/>
</dbReference>
<dbReference type="GO" id="GO:0016887">
    <property type="term" value="F:ATP hydrolysis activity"/>
    <property type="evidence" value="ECO:0007669"/>
    <property type="project" value="InterPro"/>
</dbReference>
<dbReference type="GO" id="GO:0008643">
    <property type="term" value="P:carbohydrate transport"/>
    <property type="evidence" value="ECO:0007669"/>
    <property type="project" value="InterPro"/>
</dbReference>
<dbReference type="CDD" id="cd03301">
    <property type="entry name" value="ABC_MalK_N"/>
    <property type="match status" value="1"/>
</dbReference>
<dbReference type="FunFam" id="2.40.50.100:FF:000100">
    <property type="entry name" value="Carbohydrate ABC transporter ATP-binding protein (CUT1 family)"/>
    <property type="match status" value="1"/>
</dbReference>
<dbReference type="FunFam" id="3.40.50.300:FF:000042">
    <property type="entry name" value="Maltose/maltodextrin ABC transporter, ATP-binding protein"/>
    <property type="match status" value="1"/>
</dbReference>
<dbReference type="Gene3D" id="2.40.50.100">
    <property type="match status" value="1"/>
</dbReference>
<dbReference type="Gene3D" id="3.40.50.300">
    <property type="entry name" value="P-loop containing nucleotide triphosphate hydrolases"/>
    <property type="match status" value="1"/>
</dbReference>
<dbReference type="InterPro" id="IPR003593">
    <property type="entry name" value="AAA+_ATPase"/>
</dbReference>
<dbReference type="InterPro" id="IPR003439">
    <property type="entry name" value="ABC_transporter-like_ATP-bd"/>
</dbReference>
<dbReference type="InterPro" id="IPR017871">
    <property type="entry name" value="ABC_transporter-like_CS"/>
</dbReference>
<dbReference type="InterPro" id="IPR015855">
    <property type="entry name" value="ABC_transpr_MalK-like"/>
</dbReference>
<dbReference type="InterPro" id="IPR047641">
    <property type="entry name" value="ABC_transpr_MalK/UgpC-like"/>
</dbReference>
<dbReference type="InterPro" id="IPR008995">
    <property type="entry name" value="Mo/tungstate-bd_C_term_dom"/>
</dbReference>
<dbReference type="InterPro" id="IPR040582">
    <property type="entry name" value="OB_MalK-like"/>
</dbReference>
<dbReference type="InterPro" id="IPR027417">
    <property type="entry name" value="P-loop_NTPase"/>
</dbReference>
<dbReference type="NCBIfam" id="NF008653">
    <property type="entry name" value="PRK11650.1"/>
    <property type="match status" value="1"/>
</dbReference>
<dbReference type="PANTHER" id="PTHR43875">
    <property type="entry name" value="MALTODEXTRIN IMPORT ATP-BINDING PROTEIN MSMX"/>
    <property type="match status" value="1"/>
</dbReference>
<dbReference type="PANTHER" id="PTHR43875:SF1">
    <property type="entry name" value="OSMOPROTECTIVE COMPOUNDS UPTAKE ATP-BINDING PROTEIN GGTA"/>
    <property type="match status" value="1"/>
</dbReference>
<dbReference type="Pfam" id="PF00005">
    <property type="entry name" value="ABC_tran"/>
    <property type="match status" value="1"/>
</dbReference>
<dbReference type="Pfam" id="PF17912">
    <property type="entry name" value="OB_MalK"/>
    <property type="match status" value="1"/>
</dbReference>
<dbReference type="SMART" id="SM00382">
    <property type="entry name" value="AAA"/>
    <property type="match status" value="1"/>
</dbReference>
<dbReference type="SUPFAM" id="SSF50331">
    <property type="entry name" value="MOP-like"/>
    <property type="match status" value="1"/>
</dbReference>
<dbReference type="SUPFAM" id="SSF52540">
    <property type="entry name" value="P-loop containing nucleoside triphosphate hydrolases"/>
    <property type="match status" value="1"/>
</dbReference>
<dbReference type="PROSITE" id="PS00211">
    <property type="entry name" value="ABC_TRANSPORTER_1"/>
    <property type="match status" value="1"/>
</dbReference>
<dbReference type="PROSITE" id="PS50893">
    <property type="entry name" value="ABC_TRANSPORTER_2"/>
    <property type="match status" value="1"/>
</dbReference>
<sequence>MATVTFDKATRVYPGSTKPAVDGLDIDIADGEFLVLVGPSGCGKSTSLRMLAGLEDVNGGAIRIGDRDVTHLPPKDRDIAMVFQNYALYPHMSVADNMGFALKIAGVNKAEIRQKVEEAAKILDLTEYLDRKPKALSGGQRQRVAMGRAIVREPQVFLMDEPLSNLDAKLRVSTRTQIASLQRRLGITTVYVTHDQVEAMTMGDRVAVLKDGLLQQVDSPRNMYDKPANLFVAGFIGSPAMNLVEVPITDGGVKFGNSVVPVNRDALKAASDKGDRTVTVGVRPEHFDVVELNGGAAKTLSKDSADAPAGLAVSVNVVEETGADGYIYGTVEVGGETKDLVVRVSSRAVPEKGATVHVVPRPGEIHVFSSSTGERLTD</sequence>
<feature type="chain" id="PRO_0000447873" description="Diacetylchitobiose uptake system ATP-binding protein MsiK">
    <location>
        <begin position="1"/>
        <end position="378"/>
    </location>
</feature>
<feature type="domain" description="ABC transporter" evidence="1">
    <location>
        <begin position="4"/>
        <end position="236"/>
    </location>
</feature>
<feature type="binding site" evidence="1">
    <location>
        <begin position="38"/>
        <end position="45"/>
    </location>
    <ligand>
        <name>ATP</name>
        <dbReference type="ChEBI" id="CHEBI:30616"/>
    </ligand>
</feature>
<gene>
    <name evidence="4" type="primary">msiK</name>
    <name evidence="8" type="ordered locus">SCO4240</name>
</gene>
<evidence type="ECO:0000255" key="1">
    <source>
        <dbReference type="PROSITE-ProRule" id="PRU00434"/>
    </source>
</evidence>
<evidence type="ECO:0000269" key="2">
    <source>
    </source>
</evidence>
<evidence type="ECO:0000269" key="3">
    <source>
    </source>
</evidence>
<evidence type="ECO:0000303" key="4">
    <source>
    </source>
</evidence>
<evidence type="ECO:0000305" key="5"/>
<evidence type="ECO:0000305" key="6">
    <source>
    </source>
</evidence>
<evidence type="ECO:0000305" key="7">
    <source>
    </source>
</evidence>
<evidence type="ECO:0000312" key="8">
    <source>
        <dbReference type="EMBL" id="CAB77334.1"/>
    </source>
</evidence>